<sequence length="360" mass="40006">MYTLHYICLVLSCVIYFVWTLSCPTRNQYVSVKYVNLTNYSGPYPNGTTLHVTCREGYAKRPVQTVTCVNGNWTVPKKCQKKKCSTPQDLLNGRYTVTGNLYYGSVITYTCNSGYSLIGSTTSACLLKRGGRVDWTPRPPICDIKKCKPPPQIANGTHTNVKDFYTYLDTVTYSCNDETKLTLTGPSSKLCSETGSWVPNGETKCEFIFCKLPQVANAYVEVRKSATSMQYLHINVKCYKGFMLYGETPNTCNHGVWSPAIPECMKISSPKGDMPGINSNEDNSTPSGRICNGNCTTSMPTQTYTIITARYTSHIYFPTGKTYKLPRGVLVIILTTSFIIIGIILTGVCLHRCRVCMSGQ</sequence>
<keyword id="KW-0025">Alternative splicing</keyword>
<keyword id="KW-1015">Disulfide bond</keyword>
<keyword id="KW-0325">Glycoprotein</keyword>
<keyword id="KW-0472">Membrane</keyword>
<keyword id="KW-1185">Reference proteome</keyword>
<keyword id="KW-0677">Repeat</keyword>
<keyword id="KW-0964">Secreted</keyword>
<keyword id="KW-0732">Signal</keyword>
<keyword id="KW-0768">Sushi</keyword>
<keyword id="KW-0812">Transmembrane</keyword>
<keyword id="KW-1133">Transmembrane helix</keyword>
<evidence type="ECO:0000255" key="1"/>
<evidence type="ECO:0000255" key="2">
    <source>
        <dbReference type="PROSITE-ProRule" id="PRU00302"/>
    </source>
</evidence>
<evidence type="ECO:0000305" key="3"/>
<name>CCPH_SHV21</name>
<comment type="subcellular location">
    <molecule>Isoform 1</molecule>
    <subcellularLocation>
        <location>Membrane</location>
        <topology>Single-pass membrane protein</topology>
    </subcellularLocation>
</comment>
<comment type="subcellular location">
    <molecule>Isoform 2</molecule>
    <subcellularLocation>
        <location>Secreted</location>
    </subcellularLocation>
</comment>
<comment type="alternative products">
    <event type="alternative splicing"/>
    <isoform>
        <id>Q01016-1</id>
        <name>1</name>
        <sequence type="displayed"/>
    </isoform>
    <isoform>
        <id>Q01016-2</id>
        <name>2</name>
        <name>Short</name>
        <sequence type="described" ref="VSP_001212 VSP_001213"/>
    </isoform>
</comment>
<comment type="similarity">
    <text evidence="3">Belongs to the receptors of complement activation (RCA) family.</text>
</comment>
<organism>
    <name type="scientific">Saimiriine herpesvirus 2 (strain 11)</name>
    <name type="common">SaHV-2</name>
    <name type="synonym">Herpesvirus saimiri</name>
    <dbReference type="NCBI Taxonomy" id="10383"/>
    <lineage>
        <taxon>Viruses</taxon>
        <taxon>Duplodnaviria</taxon>
        <taxon>Heunggongvirae</taxon>
        <taxon>Peploviricota</taxon>
        <taxon>Herviviricetes</taxon>
        <taxon>Herpesvirales</taxon>
        <taxon>Orthoherpesviridae</taxon>
        <taxon>Gammaherpesvirinae</taxon>
        <taxon>Rhadinovirus</taxon>
        <taxon>Rhadinovirus saimiriinegamma2</taxon>
        <taxon>Saimiriine herpesvirus 2</taxon>
    </lineage>
</organism>
<protein>
    <recommendedName>
        <fullName>Complement control protein homolog</fullName>
        <shortName>CCPH</shortName>
    </recommendedName>
</protein>
<reference key="1">
    <citation type="journal article" date="1992" name="J. Virol.">
        <title>Primary structure of the herpesvirus saimiri genome.</title>
        <authorList>
            <person name="Albrecht J.-C."/>
            <person name="Nicholas J."/>
            <person name="Biller D."/>
            <person name="Cameron K.R."/>
            <person name="Biesinger B."/>
            <person name="Newman C."/>
            <person name="Wittmann S."/>
            <person name="Craxton M.A."/>
            <person name="Coleman H."/>
            <person name="Fleckenstein B."/>
            <person name="Honess R.W."/>
        </authorList>
    </citation>
    <scope>NUCLEOTIDE SEQUENCE [LARGE SCALE GENOMIC DNA]</scope>
</reference>
<reference key="2">
    <citation type="journal article" date="1992" name="J. Virol.">
        <title>New member of the multigene family of complement control proteins in herpesvirus saimiri.</title>
        <authorList>
            <person name="Albrecht J.-C."/>
            <person name="Fleckenstein B."/>
        </authorList>
    </citation>
    <scope>SIMILARITY TO CCP</scope>
</reference>
<organismHost>
    <name type="scientific">Saimiri sciureus</name>
    <name type="common">Common squirrel monkey</name>
    <dbReference type="NCBI Taxonomy" id="9521"/>
</organismHost>
<gene>
    <name type="primary">4</name>
    <name type="synonym">CCPH</name>
</gene>
<dbReference type="EMBL" id="X64346">
    <property type="protein sequence ID" value="CAA45626.1"/>
    <property type="molecule type" value="Genomic_DNA"/>
</dbReference>
<dbReference type="EMBL" id="X64346">
    <property type="protein sequence ID" value="CAA45627.1"/>
    <property type="molecule type" value="Genomic_DNA"/>
</dbReference>
<dbReference type="EMBL" id="X60283">
    <property type="protein sequence ID" value="CAA42823.1"/>
    <property type="molecule type" value="Genomic_DNA"/>
</dbReference>
<dbReference type="EMBL" id="X60283">
    <property type="protein sequence ID" value="CAA42822.1"/>
    <property type="molecule type" value="Genomic_DNA"/>
</dbReference>
<dbReference type="PIR" id="A42534">
    <property type="entry name" value="WMBE1E"/>
</dbReference>
<dbReference type="SMR" id="Q01016"/>
<dbReference type="GlyCosmos" id="Q01016">
    <property type="glycosylation" value="6 sites, No reported glycans"/>
</dbReference>
<dbReference type="KEGG" id="vg:1488258"/>
<dbReference type="KEGG" id="vg:1488259"/>
<dbReference type="Proteomes" id="UP000000587">
    <property type="component" value="Segment"/>
</dbReference>
<dbReference type="GO" id="GO:0005576">
    <property type="term" value="C:extracellular region"/>
    <property type="evidence" value="ECO:0007669"/>
    <property type="project" value="UniProtKB-SubCell"/>
</dbReference>
<dbReference type="GO" id="GO:0016020">
    <property type="term" value="C:membrane"/>
    <property type="evidence" value="ECO:0007669"/>
    <property type="project" value="UniProtKB-SubCell"/>
</dbReference>
<dbReference type="GO" id="GO:0001848">
    <property type="term" value="F:complement binding"/>
    <property type="evidence" value="ECO:0007669"/>
    <property type="project" value="InterPro"/>
</dbReference>
<dbReference type="GO" id="GO:0045916">
    <property type="term" value="P:negative regulation of complement activation"/>
    <property type="evidence" value="ECO:0007669"/>
    <property type="project" value="InterPro"/>
</dbReference>
<dbReference type="CDD" id="cd00033">
    <property type="entry name" value="CCP"/>
    <property type="match status" value="4"/>
</dbReference>
<dbReference type="Gene3D" id="2.10.70.10">
    <property type="entry name" value="Complement Module, domain 1"/>
    <property type="match status" value="4"/>
</dbReference>
<dbReference type="InterPro" id="IPR011176">
    <property type="entry name" value="CCP_VACV_C3/B5"/>
</dbReference>
<dbReference type="InterPro" id="IPR050350">
    <property type="entry name" value="Compl-Cell_Adhes-Reg"/>
</dbReference>
<dbReference type="InterPro" id="IPR035976">
    <property type="entry name" value="Sushi/SCR/CCP_sf"/>
</dbReference>
<dbReference type="InterPro" id="IPR000436">
    <property type="entry name" value="Sushi_SCR_CCP_dom"/>
</dbReference>
<dbReference type="PANTHER" id="PTHR19325">
    <property type="entry name" value="COMPLEMENT COMPONENT-RELATED SUSHI DOMAIN-CONTAINING"/>
    <property type="match status" value="1"/>
</dbReference>
<dbReference type="PANTHER" id="PTHR19325:SF571">
    <property type="entry name" value="SUSHI DOMAIN-CONTAINING PROTEIN"/>
    <property type="match status" value="1"/>
</dbReference>
<dbReference type="Pfam" id="PF00084">
    <property type="entry name" value="Sushi"/>
    <property type="match status" value="3"/>
</dbReference>
<dbReference type="PIRSF" id="PIRSF002486">
    <property type="entry name" value="CIP_VAC_C3L"/>
    <property type="match status" value="1"/>
</dbReference>
<dbReference type="SMART" id="SM00032">
    <property type="entry name" value="CCP"/>
    <property type="match status" value="4"/>
</dbReference>
<dbReference type="SUPFAM" id="SSF57535">
    <property type="entry name" value="Complement control module/SCR domain"/>
    <property type="match status" value="4"/>
</dbReference>
<dbReference type="PROSITE" id="PS50923">
    <property type="entry name" value="SUSHI"/>
    <property type="match status" value="4"/>
</dbReference>
<proteinExistence type="inferred from homology"/>
<feature type="signal peptide" evidence="1">
    <location>
        <begin position="1"/>
        <end position="20"/>
    </location>
</feature>
<feature type="chain" id="PRO_0000006015" description="Complement control protein homolog">
    <location>
        <begin position="21"/>
        <end position="360"/>
    </location>
</feature>
<feature type="transmembrane region" description="Helical" evidence="1">
    <location>
        <begin position="328"/>
        <end position="350"/>
    </location>
</feature>
<feature type="domain" description="Sushi 1" evidence="2">
    <location>
        <begin position="21"/>
        <end position="81"/>
    </location>
</feature>
<feature type="domain" description="Sushi 2" evidence="2">
    <location>
        <begin position="82"/>
        <end position="144"/>
    </location>
</feature>
<feature type="domain" description="Sushi 3" evidence="2">
    <location>
        <begin position="145"/>
        <end position="207"/>
    </location>
</feature>
<feature type="domain" description="Sushi 4" evidence="2">
    <location>
        <begin position="208"/>
        <end position="266"/>
    </location>
</feature>
<feature type="glycosylation site" description="N-linked (GlcNAc...) asparagine; by host" evidence="1">
    <location>
        <position position="36"/>
    </location>
</feature>
<feature type="glycosylation site" description="N-linked (GlcNAc...) asparagine; by host" evidence="1">
    <location>
        <position position="39"/>
    </location>
</feature>
<feature type="glycosylation site" description="N-linked (GlcNAc...) asparagine; by host" evidence="1">
    <location>
        <position position="46"/>
    </location>
</feature>
<feature type="glycosylation site" description="N-linked (GlcNAc...) asparagine; by host" evidence="1">
    <location>
        <position position="72"/>
    </location>
</feature>
<feature type="glycosylation site" description="N-linked (GlcNAc...) asparagine; by host" evidence="1">
    <location>
        <position position="155"/>
    </location>
</feature>
<feature type="glycosylation site" description="N-linked (GlcNAc...) asparagine; by host" evidence="1">
    <location>
        <position position="294"/>
    </location>
</feature>
<feature type="disulfide bond" evidence="2">
    <location>
        <begin position="23"/>
        <end position="68"/>
    </location>
</feature>
<feature type="disulfide bond" evidence="2">
    <location>
        <begin position="54"/>
        <end position="79"/>
    </location>
</feature>
<feature type="disulfide bond" evidence="2">
    <location>
        <begin position="84"/>
        <end position="125"/>
    </location>
</feature>
<feature type="disulfide bond" evidence="2">
    <location>
        <begin position="111"/>
        <end position="142"/>
    </location>
</feature>
<feature type="disulfide bond" evidence="2">
    <location>
        <begin position="147"/>
        <end position="191"/>
    </location>
</feature>
<feature type="disulfide bond" evidence="2">
    <location>
        <begin position="175"/>
        <end position="205"/>
    </location>
</feature>
<feature type="disulfide bond" evidence="2">
    <location>
        <begin position="210"/>
        <end position="252"/>
    </location>
</feature>
<feature type="disulfide bond" evidence="2">
    <location>
        <begin position="238"/>
        <end position="264"/>
    </location>
</feature>
<feature type="splice variant" id="VSP_001212" description="In isoform 2." evidence="3">
    <original>RICNGNCTTSMPTQ</original>
    <variation>AECACPGSNYPISS</variation>
    <location>
        <begin position="289"/>
        <end position="302"/>
    </location>
</feature>
<feature type="splice variant" id="VSP_001213" description="In isoform 2." evidence="3">
    <location>
        <begin position="303"/>
        <end position="360"/>
    </location>
</feature>
<accession>Q01016</accession>